<comment type="function">
    <text evidence="1">Specifically methylates the uridine in position 2552 of 23S rRNA at the 2'-O position of the ribose in the fully assembled 50S ribosomal subunit.</text>
</comment>
<comment type="catalytic activity">
    <reaction evidence="1">
        <text>uridine(2552) in 23S rRNA + S-adenosyl-L-methionine = 2'-O-methyluridine(2552) in 23S rRNA + S-adenosyl-L-homocysteine + H(+)</text>
        <dbReference type="Rhea" id="RHEA:42720"/>
        <dbReference type="Rhea" id="RHEA-COMP:10202"/>
        <dbReference type="Rhea" id="RHEA-COMP:10203"/>
        <dbReference type="ChEBI" id="CHEBI:15378"/>
        <dbReference type="ChEBI" id="CHEBI:57856"/>
        <dbReference type="ChEBI" id="CHEBI:59789"/>
        <dbReference type="ChEBI" id="CHEBI:65315"/>
        <dbReference type="ChEBI" id="CHEBI:74478"/>
        <dbReference type="EC" id="2.1.1.166"/>
    </reaction>
</comment>
<comment type="subcellular location">
    <subcellularLocation>
        <location evidence="1">Cytoplasm</location>
    </subcellularLocation>
</comment>
<comment type="similarity">
    <text evidence="1">Belongs to the class I-like SAM-binding methyltransferase superfamily. RNA methyltransferase RlmE family.</text>
</comment>
<reference key="1">
    <citation type="journal article" date="2010" name="J. Bacteriol.">
        <title>Genome sequence of the dioxin-mineralizing bacterium Sphingomonas wittichii RW1.</title>
        <authorList>
            <person name="Miller T.R."/>
            <person name="Delcher A.L."/>
            <person name="Salzberg S.L."/>
            <person name="Saunders E."/>
            <person name="Detter J.C."/>
            <person name="Halden R.U."/>
        </authorList>
    </citation>
    <scope>NUCLEOTIDE SEQUENCE [LARGE SCALE GENOMIC DNA]</scope>
    <source>
        <strain>DSM 6014 / CCUG 31198 / JCM 15750 / NBRC 105917 / EY 4224 / RW1</strain>
    </source>
</reference>
<keyword id="KW-0963">Cytoplasm</keyword>
<keyword id="KW-0489">Methyltransferase</keyword>
<keyword id="KW-1185">Reference proteome</keyword>
<keyword id="KW-0698">rRNA processing</keyword>
<keyword id="KW-0949">S-adenosyl-L-methionine</keyword>
<keyword id="KW-0808">Transferase</keyword>
<dbReference type="EC" id="2.1.1.166" evidence="1"/>
<dbReference type="EMBL" id="CP000699">
    <property type="protein sequence ID" value="ABQ71055.1"/>
    <property type="molecule type" value="Genomic_DNA"/>
</dbReference>
<dbReference type="SMR" id="A5VFI9"/>
<dbReference type="STRING" id="392499.Swit_4718"/>
<dbReference type="PaxDb" id="392499-Swit_4718"/>
<dbReference type="KEGG" id="swi:Swit_4718"/>
<dbReference type="eggNOG" id="COG0293">
    <property type="taxonomic scope" value="Bacteria"/>
</dbReference>
<dbReference type="HOGENOM" id="CLU_009422_4_2_5"/>
<dbReference type="OrthoDB" id="9790080at2"/>
<dbReference type="Proteomes" id="UP000001989">
    <property type="component" value="Chromosome"/>
</dbReference>
<dbReference type="GO" id="GO:0005737">
    <property type="term" value="C:cytoplasm"/>
    <property type="evidence" value="ECO:0007669"/>
    <property type="project" value="UniProtKB-SubCell"/>
</dbReference>
<dbReference type="GO" id="GO:0008650">
    <property type="term" value="F:rRNA (uridine-2'-O-)-methyltransferase activity"/>
    <property type="evidence" value="ECO:0007669"/>
    <property type="project" value="UniProtKB-UniRule"/>
</dbReference>
<dbReference type="Gene3D" id="3.40.50.150">
    <property type="entry name" value="Vaccinia Virus protein VP39"/>
    <property type="match status" value="1"/>
</dbReference>
<dbReference type="HAMAP" id="MF_01547">
    <property type="entry name" value="RNA_methyltr_E"/>
    <property type="match status" value="1"/>
</dbReference>
<dbReference type="InterPro" id="IPR050082">
    <property type="entry name" value="RNA_methyltr_RlmE"/>
</dbReference>
<dbReference type="InterPro" id="IPR002877">
    <property type="entry name" value="RNA_MeTrfase_FtsJ_dom"/>
</dbReference>
<dbReference type="InterPro" id="IPR015507">
    <property type="entry name" value="rRNA-MeTfrase_E"/>
</dbReference>
<dbReference type="InterPro" id="IPR029063">
    <property type="entry name" value="SAM-dependent_MTases_sf"/>
</dbReference>
<dbReference type="PANTHER" id="PTHR10920">
    <property type="entry name" value="RIBOSOMAL RNA METHYLTRANSFERASE"/>
    <property type="match status" value="1"/>
</dbReference>
<dbReference type="PANTHER" id="PTHR10920:SF18">
    <property type="entry name" value="RRNA METHYLTRANSFERASE 2, MITOCHONDRIAL"/>
    <property type="match status" value="1"/>
</dbReference>
<dbReference type="Pfam" id="PF01728">
    <property type="entry name" value="FtsJ"/>
    <property type="match status" value="1"/>
</dbReference>
<dbReference type="PIRSF" id="PIRSF005461">
    <property type="entry name" value="23S_rRNA_mtase"/>
    <property type="match status" value="1"/>
</dbReference>
<dbReference type="SUPFAM" id="SSF53335">
    <property type="entry name" value="S-adenosyl-L-methionine-dependent methyltransferases"/>
    <property type="match status" value="1"/>
</dbReference>
<protein>
    <recommendedName>
        <fullName evidence="1">Ribosomal RNA large subunit methyltransferase E</fullName>
        <ecNumber evidence="1">2.1.1.166</ecNumber>
    </recommendedName>
    <alternativeName>
        <fullName evidence="1">23S rRNA Um2552 methyltransferase</fullName>
    </alternativeName>
    <alternativeName>
        <fullName evidence="1">rRNA (uridine-2'-O-)-methyltransferase</fullName>
    </alternativeName>
</protein>
<evidence type="ECO:0000255" key="1">
    <source>
        <dbReference type="HAMAP-Rule" id="MF_01547"/>
    </source>
</evidence>
<evidence type="ECO:0000256" key="2">
    <source>
        <dbReference type="SAM" id="MobiDB-lite"/>
    </source>
</evidence>
<proteinExistence type="inferred from homology"/>
<sequence length="229" mass="24644">MSRAGNGGRQRIKTAKGRSASSIKWIQRQLNDPYVRKAQAEGYRSRAAYKLIELDERFHFLRGAKRVIDLGIAPGGWTQVVRRVCPQAAIVGIDLLPTDPIDGAIILQMDFMSDEAPAQLAEALGGPADIVLSDMAANTVGHQQTDHLRTMALVEAGCLFASEVLRPGGTYVAKVLAGGADHGLVAELKRLFTTVKHAKPPASRKDSSEWYVIAQGFKGRPEAAGADGE</sequence>
<organism>
    <name type="scientific">Rhizorhabdus wittichii (strain DSM 6014 / CCUG 31198 / JCM 15750 / NBRC 105917 / EY 4224 / RW1)</name>
    <name type="common">Sphingomonas wittichii</name>
    <dbReference type="NCBI Taxonomy" id="392499"/>
    <lineage>
        <taxon>Bacteria</taxon>
        <taxon>Pseudomonadati</taxon>
        <taxon>Pseudomonadota</taxon>
        <taxon>Alphaproteobacteria</taxon>
        <taxon>Sphingomonadales</taxon>
        <taxon>Sphingomonadaceae</taxon>
        <taxon>Rhizorhabdus</taxon>
    </lineage>
</organism>
<accession>A5VFI9</accession>
<name>RLME_RHIWR</name>
<feature type="chain" id="PRO_1000087720" description="Ribosomal RNA large subunit methyltransferase E">
    <location>
        <begin position="1"/>
        <end position="229"/>
    </location>
</feature>
<feature type="region of interest" description="Disordered" evidence="2">
    <location>
        <begin position="1"/>
        <end position="20"/>
    </location>
</feature>
<feature type="active site" description="Proton acceptor" evidence="1">
    <location>
        <position position="174"/>
    </location>
</feature>
<feature type="binding site" evidence="1">
    <location>
        <position position="75"/>
    </location>
    <ligand>
        <name>S-adenosyl-L-methionine</name>
        <dbReference type="ChEBI" id="CHEBI:59789"/>
    </ligand>
</feature>
<feature type="binding site" evidence="1">
    <location>
        <position position="77"/>
    </location>
    <ligand>
        <name>S-adenosyl-L-methionine</name>
        <dbReference type="ChEBI" id="CHEBI:59789"/>
    </ligand>
</feature>
<feature type="binding site" evidence="1">
    <location>
        <position position="94"/>
    </location>
    <ligand>
        <name>S-adenosyl-L-methionine</name>
        <dbReference type="ChEBI" id="CHEBI:59789"/>
    </ligand>
</feature>
<feature type="binding site" evidence="1">
    <location>
        <position position="110"/>
    </location>
    <ligand>
        <name>S-adenosyl-L-methionine</name>
        <dbReference type="ChEBI" id="CHEBI:59789"/>
    </ligand>
</feature>
<feature type="binding site" evidence="1">
    <location>
        <position position="134"/>
    </location>
    <ligand>
        <name>S-adenosyl-L-methionine</name>
        <dbReference type="ChEBI" id="CHEBI:59789"/>
    </ligand>
</feature>
<gene>
    <name evidence="1" type="primary">rlmE</name>
    <name evidence="1" type="synonym">ftsJ</name>
    <name evidence="1" type="synonym">rrmJ</name>
    <name type="ordered locus">Swit_4718</name>
</gene>